<proteinExistence type="inferred from homology"/>
<gene>
    <name evidence="1" type="primary">nhaP2</name>
    <name type="synonym">cvrA</name>
    <name type="ordered locus">ECUMN_1482</name>
</gene>
<name>NHAP2_ECOLU</name>
<dbReference type="EMBL" id="CU928163">
    <property type="protein sequence ID" value="CAR12690.1"/>
    <property type="molecule type" value="Genomic_DNA"/>
</dbReference>
<dbReference type="RefSeq" id="WP_000340206.1">
    <property type="nucleotide sequence ID" value="NC_011751.1"/>
</dbReference>
<dbReference type="RefSeq" id="YP_002412227.1">
    <property type="nucleotide sequence ID" value="NC_011751.1"/>
</dbReference>
<dbReference type="SMR" id="B7N3Z7"/>
<dbReference type="STRING" id="585056.ECUMN_1482"/>
<dbReference type="KEGG" id="eum:ECUMN_1482"/>
<dbReference type="PATRIC" id="fig|585056.7.peg.1679"/>
<dbReference type="HOGENOM" id="CLU_005912_9_2_6"/>
<dbReference type="Proteomes" id="UP000007097">
    <property type="component" value="Chromosome"/>
</dbReference>
<dbReference type="GO" id="GO:0005886">
    <property type="term" value="C:plasma membrane"/>
    <property type="evidence" value="ECO:0007669"/>
    <property type="project" value="UniProtKB-SubCell"/>
</dbReference>
<dbReference type="GO" id="GO:0050660">
    <property type="term" value="F:flavin adenine dinucleotide binding"/>
    <property type="evidence" value="ECO:0007669"/>
    <property type="project" value="InterPro"/>
</dbReference>
<dbReference type="GO" id="GO:0015386">
    <property type="term" value="F:potassium:proton antiporter activity"/>
    <property type="evidence" value="ECO:0007669"/>
    <property type="project" value="UniProtKB-UniRule"/>
</dbReference>
<dbReference type="GO" id="GO:0006884">
    <property type="term" value="P:cell volume homeostasis"/>
    <property type="evidence" value="ECO:0007669"/>
    <property type="project" value="InterPro"/>
</dbReference>
<dbReference type="FunFam" id="1.20.1530.20:FF:000002">
    <property type="entry name" value="K(+)/H(+) antiporter NhaP2"/>
    <property type="match status" value="1"/>
</dbReference>
<dbReference type="FunFam" id="3.30.465.10:FF:000009">
    <property type="entry name" value="K(+)/H(+) antiporter NhaP2"/>
    <property type="match status" value="1"/>
</dbReference>
<dbReference type="FunFam" id="3.30.70.1450:FF:000007">
    <property type="entry name" value="K(+)/H(+) antiporter NhaP2"/>
    <property type="match status" value="1"/>
</dbReference>
<dbReference type="Gene3D" id="1.20.1530.20">
    <property type="match status" value="1"/>
</dbReference>
<dbReference type="Gene3D" id="3.30.465.10">
    <property type="match status" value="1"/>
</dbReference>
<dbReference type="Gene3D" id="3.30.70.1450">
    <property type="entry name" value="Regulator of K+ conductance, C-terminal domain"/>
    <property type="match status" value="1"/>
</dbReference>
<dbReference type="HAMAP" id="MF_01075">
    <property type="entry name" value="NhaP2"/>
    <property type="match status" value="1"/>
</dbReference>
<dbReference type="InterPro" id="IPR006153">
    <property type="entry name" value="Cation/H_exchanger_TM"/>
</dbReference>
<dbReference type="InterPro" id="IPR036318">
    <property type="entry name" value="FAD-bd_PCMH-like_sf"/>
</dbReference>
<dbReference type="InterPro" id="IPR016169">
    <property type="entry name" value="FAD-bd_PCMH_sub2"/>
</dbReference>
<dbReference type="InterPro" id="IPR038770">
    <property type="entry name" value="Na+/solute_symporter_sf"/>
</dbReference>
<dbReference type="InterPro" id="IPR023729">
    <property type="entry name" value="NhaP2"/>
</dbReference>
<dbReference type="InterPro" id="IPR006037">
    <property type="entry name" value="RCK_C"/>
</dbReference>
<dbReference type="InterPro" id="IPR036721">
    <property type="entry name" value="RCK_C_sf"/>
</dbReference>
<dbReference type="InterPro" id="IPR005170">
    <property type="entry name" value="Transptr-assoc_dom"/>
</dbReference>
<dbReference type="NCBIfam" id="NF003714">
    <property type="entry name" value="PRK05326.1-1"/>
    <property type="match status" value="1"/>
</dbReference>
<dbReference type="NCBIfam" id="NF003715">
    <property type="entry name" value="PRK05326.1-2"/>
    <property type="match status" value="1"/>
</dbReference>
<dbReference type="NCBIfam" id="NF003716">
    <property type="entry name" value="PRK05326.1-3"/>
    <property type="match status" value="1"/>
</dbReference>
<dbReference type="PANTHER" id="PTHR32507:SF7">
    <property type="entry name" value="K(+)_H(+) ANTIPORTER NHAP2"/>
    <property type="match status" value="1"/>
</dbReference>
<dbReference type="PANTHER" id="PTHR32507">
    <property type="entry name" value="NA(+)/H(+) ANTIPORTER 1"/>
    <property type="match status" value="1"/>
</dbReference>
<dbReference type="Pfam" id="PF03471">
    <property type="entry name" value="CorC_HlyC"/>
    <property type="match status" value="1"/>
</dbReference>
<dbReference type="Pfam" id="PF00999">
    <property type="entry name" value="Na_H_Exchanger"/>
    <property type="match status" value="1"/>
</dbReference>
<dbReference type="Pfam" id="PF02080">
    <property type="entry name" value="TrkA_C"/>
    <property type="match status" value="1"/>
</dbReference>
<dbReference type="SMART" id="SM01091">
    <property type="entry name" value="CorC_HlyC"/>
    <property type="match status" value="1"/>
</dbReference>
<dbReference type="SUPFAM" id="SSF56176">
    <property type="entry name" value="FAD-binding/transporter-associated domain-like"/>
    <property type="match status" value="1"/>
</dbReference>
<dbReference type="SUPFAM" id="SSF116726">
    <property type="entry name" value="TrkA C-terminal domain-like"/>
    <property type="match status" value="1"/>
</dbReference>
<dbReference type="PROSITE" id="PS51202">
    <property type="entry name" value="RCK_C"/>
    <property type="match status" value="1"/>
</dbReference>
<reference key="1">
    <citation type="journal article" date="2009" name="PLoS Genet.">
        <title>Organised genome dynamics in the Escherichia coli species results in highly diverse adaptive paths.</title>
        <authorList>
            <person name="Touchon M."/>
            <person name="Hoede C."/>
            <person name="Tenaillon O."/>
            <person name="Barbe V."/>
            <person name="Baeriswyl S."/>
            <person name="Bidet P."/>
            <person name="Bingen E."/>
            <person name="Bonacorsi S."/>
            <person name="Bouchier C."/>
            <person name="Bouvet O."/>
            <person name="Calteau A."/>
            <person name="Chiapello H."/>
            <person name="Clermont O."/>
            <person name="Cruveiller S."/>
            <person name="Danchin A."/>
            <person name="Diard M."/>
            <person name="Dossat C."/>
            <person name="Karoui M.E."/>
            <person name="Frapy E."/>
            <person name="Garry L."/>
            <person name="Ghigo J.M."/>
            <person name="Gilles A.M."/>
            <person name="Johnson J."/>
            <person name="Le Bouguenec C."/>
            <person name="Lescat M."/>
            <person name="Mangenot S."/>
            <person name="Martinez-Jehanne V."/>
            <person name="Matic I."/>
            <person name="Nassif X."/>
            <person name="Oztas S."/>
            <person name="Petit M.A."/>
            <person name="Pichon C."/>
            <person name="Rouy Z."/>
            <person name="Ruf C.S."/>
            <person name="Schneider D."/>
            <person name="Tourret J."/>
            <person name="Vacherie B."/>
            <person name="Vallenet D."/>
            <person name="Medigue C."/>
            <person name="Rocha E.P.C."/>
            <person name="Denamur E."/>
        </authorList>
    </citation>
    <scope>NUCLEOTIDE SEQUENCE [LARGE SCALE GENOMIC DNA]</scope>
    <source>
        <strain>UMN026 / ExPEC</strain>
    </source>
</reference>
<organism>
    <name type="scientific">Escherichia coli O17:K52:H18 (strain UMN026 / ExPEC)</name>
    <dbReference type="NCBI Taxonomy" id="585056"/>
    <lineage>
        <taxon>Bacteria</taxon>
        <taxon>Pseudomonadati</taxon>
        <taxon>Pseudomonadota</taxon>
        <taxon>Gammaproteobacteria</taxon>
        <taxon>Enterobacterales</taxon>
        <taxon>Enterobacteriaceae</taxon>
        <taxon>Escherichia</taxon>
    </lineage>
</organism>
<feature type="chain" id="PRO_1000136704" description="K(+)/H(+) antiporter NhaP2">
    <location>
        <begin position="1"/>
        <end position="578"/>
    </location>
</feature>
<feature type="transmembrane region" description="Helical" evidence="1">
    <location>
        <begin position="6"/>
        <end position="26"/>
    </location>
</feature>
<feature type="transmembrane region" description="Helical" evidence="1">
    <location>
        <begin position="30"/>
        <end position="50"/>
    </location>
</feature>
<feature type="transmembrane region" description="Helical" evidence="1">
    <location>
        <begin position="58"/>
        <end position="78"/>
    </location>
</feature>
<feature type="transmembrane region" description="Helical" evidence="1">
    <location>
        <begin position="87"/>
        <end position="107"/>
    </location>
</feature>
<feature type="transmembrane region" description="Helical" evidence="1">
    <location>
        <begin position="109"/>
        <end position="129"/>
    </location>
</feature>
<feature type="transmembrane region" description="Helical" evidence="1">
    <location>
        <begin position="156"/>
        <end position="176"/>
    </location>
</feature>
<feature type="transmembrane region" description="Helical" evidence="1">
    <location>
        <begin position="185"/>
        <end position="205"/>
    </location>
</feature>
<feature type="transmembrane region" description="Helical" evidence="1">
    <location>
        <begin position="216"/>
        <end position="236"/>
    </location>
</feature>
<feature type="transmembrane region" description="Helical" evidence="1">
    <location>
        <begin position="237"/>
        <end position="257"/>
    </location>
</feature>
<feature type="transmembrane region" description="Helical" evidence="1">
    <location>
        <begin position="270"/>
        <end position="290"/>
    </location>
</feature>
<feature type="transmembrane region" description="Helical" evidence="1">
    <location>
        <begin position="293"/>
        <end position="313"/>
    </location>
</feature>
<feature type="transmembrane region" description="Helical" evidence="1">
    <location>
        <begin position="334"/>
        <end position="354"/>
    </location>
</feature>
<feature type="transmembrane region" description="Helical" evidence="1">
    <location>
        <begin position="363"/>
        <end position="383"/>
    </location>
</feature>
<feature type="domain" description="RCK C-terminal" evidence="1">
    <location>
        <begin position="403"/>
        <end position="485"/>
    </location>
</feature>
<comment type="function">
    <text evidence="1">K(+)/H(+) antiporter that extrudes potassium in exchange for external protons and maintains the internal concentration of potassium under toxic levels.</text>
</comment>
<comment type="catalytic activity">
    <reaction evidence="1">
        <text>K(+)(in) + H(+)(out) = K(+)(out) + H(+)(in)</text>
        <dbReference type="Rhea" id="RHEA:29467"/>
        <dbReference type="ChEBI" id="CHEBI:15378"/>
        <dbReference type="ChEBI" id="CHEBI:29103"/>
    </reaction>
    <physiologicalReaction direction="left-to-right" evidence="1">
        <dbReference type="Rhea" id="RHEA:29468"/>
    </physiologicalReaction>
</comment>
<comment type="subcellular location">
    <subcellularLocation>
        <location evidence="1">Cell inner membrane</location>
        <topology evidence="1">Multi-pass membrane protein</topology>
    </subcellularLocation>
</comment>
<comment type="similarity">
    <text evidence="1">Belongs to the monovalent cation:proton antiporter 1 (CPA1) transporter (TC 2.A.36) family. NhaP2 subfamily.</text>
</comment>
<evidence type="ECO:0000255" key="1">
    <source>
        <dbReference type="HAMAP-Rule" id="MF_01075"/>
    </source>
</evidence>
<accession>B7N3Z7</accession>
<sequence>MDATTIISLFILGSILVTSSILLSSFSSRLGIPILVIFLAIGMLAGVDGVGGIPFDNYPFAYMVSNLALAIILLDGGMRTQASSFRVALGPALSLATLGVLITSGLTGMMAAWLFNLDLIEGLLIGAIVGSTDAAAVFSLLGGKGLNERVGSTLEIESGSNDPMAVFLTITLIAMIQQHESSVSWMFVVDILQQFGLGIVIGLGGGYLLLQMINRIALPAGLYPLLALSGGILIFALTTALEGSGILAVYLCGFLLGNRPIRNRYGILQNFDGLAWLAQIAMFLVLGLLVNPSDLLPIAIPALILSAWMIFFARPLSVFAGLLPFRGFNLRERVFISWVGLRGAVPIILAVFPMMAGLENARLFFNVAFFVVLVSLLLQGTSLSWAAKKAKVVVPPVGRPVSRVGLDIHPENPWEQFVYQLSADKWCVGAALRDLHMPKETRIAALFRDNQLLHPTGSTRLREGDVLCVIGRERDLPALGKLFSQSPPVALDQRFFGDFILEASAKYADVALIYGLEDGREYRDKQQTLGEIVQQLLGAAPVVGDQVEFAGMIWTVAEKEDNEVLKIGVRVAEEEAES</sequence>
<keyword id="KW-0050">Antiport</keyword>
<keyword id="KW-0997">Cell inner membrane</keyword>
<keyword id="KW-1003">Cell membrane</keyword>
<keyword id="KW-0406">Ion transport</keyword>
<keyword id="KW-0472">Membrane</keyword>
<keyword id="KW-0630">Potassium</keyword>
<keyword id="KW-0633">Potassium transport</keyword>
<keyword id="KW-0812">Transmembrane</keyword>
<keyword id="KW-1133">Transmembrane helix</keyword>
<keyword id="KW-0813">Transport</keyword>
<protein>
    <recommendedName>
        <fullName evidence="1">K(+)/H(+) antiporter NhaP2</fullName>
    </recommendedName>
    <alternativeName>
        <fullName evidence="1">Potassium/proton antiporter NhaP2</fullName>
    </alternativeName>
</protein>